<organism>
    <name type="scientific">Azoarcus sp. (strain BH72)</name>
    <dbReference type="NCBI Taxonomy" id="418699"/>
    <lineage>
        <taxon>Bacteria</taxon>
        <taxon>Pseudomonadati</taxon>
        <taxon>Pseudomonadota</taxon>
        <taxon>Betaproteobacteria</taxon>
        <taxon>Rhodocyclales</taxon>
        <taxon>Zoogloeaceae</taxon>
        <taxon>Azoarcus</taxon>
    </lineage>
</organism>
<comment type="subcellular location">
    <subcellularLocation>
        <location evidence="1">Cell membrane</location>
        <topology evidence="1">Multi-pass membrane protein</topology>
    </subcellularLocation>
</comment>
<comment type="similarity">
    <text evidence="1">Belongs to the UPF0391 family.</text>
</comment>
<gene>
    <name type="ordered locus">azo1765</name>
</gene>
<evidence type="ECO:0000255" key="1">
    <source>
        <dbReference type="HAMAP-Rule" id="MF_01361"/>
    </source>
</evidence>
<keyword id="KW-1003">Cell membrane</keyword>
<keyword id="KW-0472">Membrane</keyword>
<keyword id="KW-1185">Reference proteome</keyword>
<keyword id="KW-0812">Transmembrane</keyword>
<keyword id="KW-1133">Transmembrane helix</keyword>
<accession>A1K6C7</accession>
<sequence>MIKWAIIFFIISLVAGLFGFTNISAGAAGIAKVLFFIALAIFLIVLIFGVGLGMLVF</sequence>
<feature type="chain" id="PRO_0000298589" description="UPF0391 membrane protein azo1765">
    <location>
        <begin position="1"/>
        <end position="57"/>
    </location>
</feature>
<feature type="transmembrane region" description="Helical" evidence="1">
    <location>
        <begin position="1"/>
        <end position="21"/>
    </location>
</feature>
<feature type="transmembrane region" description="Helical" evidence="1">
    <location>
        <begin position="33"/>
        <end position="53"/>
    </location>
</feature>
<proteinExistence type="inferred from homology"/>
<protein>
    <recommendedName>
        <fullName evidence="1">UPF0391 membrane protein azo1765</fullName>
    </recommendedName>
</protein>
<name>Y1765_AZOSB</name>
<reference key="1">
    <citation type="journal article" date="2006" name="Nat. Biotechnol.">
        <title>Complete genome of the mutualistic, N2-fixing grass endophyte Azoarcus sp. strain BH72.</title>
        <authorList>
            <person name="Krause A."/>
            <person name="Ramakumar A."/>
            <person name="Bartels D."/>
            <person name="Battistoni F."/>
            <person name="Bekel T."/>
            <person name="Boch J."/>
            <person name="Boehm M."/>
            <person name="Friedrich F."/>
            <person name="Hurek T."/>
            <person name="Krause L."/>
            <person name="Linke B."/>
            <person name="McHardy A.C."/>
            <person name="Sarkar A."/>
            <person name="Schneiker S."/>
            <person name="Syed A.A."/>
            <person name="Thauer R."/>
            <person name="Vorhoelter F.-J."/>
            <person name="Weidner S."/>
            <person name="Puehler A."/>
            <person name="Reinhold-Hurek B."/>
            <person name="Kaiser O."/>
            <person name="Goesmann A."/>
        </authorList>
    </citation>
    <scope>NUCLEOTIDE SEQUENCE [LARGE SCALE GENOMIC DNA]</scope>
    <source>
        <strain>BH72</strain>
    </source>
</reference>
<dbReference type="EMBL" id="AM406670">
    <property type="protein sequence ID" value="CAL94382.1"/>
    <property type="molecule type" value="Genomic_DNA"/>
</dbReference>
<dbReference type="RefSeq" id="WP_011765498.1">
    <property type="nucleotide sequence ID" value="NC_008702.1"/>
</dbReference>
<dbReference type="SMR" id="A1K6C7"/>
<dbReference type="STRING" id="62928.azo1765"/>
<dbReference type="KEGG" id="aoa:dqs_1915"/>
<dbReference type="KEGG" id="azo:azo1765"/>
<dbReference type="eggNOG" id="COG5487">
    <property type="taxonomic scope" value="Bacteria"/>
</dbReference>
<dbReference type="HOGENOM" id="CLU_187346_1_1_4"/>
<dbReference type="OrthoDB" id="5461362at2"/>
<dbReference type="Proteomes" id="UP000002588">
    <property type="component" value="Chromosome"/>
</dbReference>
<dbReference type="GO" id="GO:0005886">
    <property type="term" value="C:plasma membrane"/>
    <property type="evidence" value="ECO:0007669"/>
    <property type="project" value="UniProtKB-SubCell"/>
</dbReference>
<dbReference type="HAMAP" id="MF_01361">
    <property type="entry name" value="UPF0391"/>
    <property type="match status" value="1"/>
</dbReference>
<dbReference type="InterPro" id="IPR009760">
    <property type="entry name" value="DUF1328"/>
</dbReference>
<dbReference type="Pfam" id="PF07043">
    <property type="entry name" value="DUF1328"/>
    <property type="match status" value="1"/>
</dbReference>
<dbReference type="PIRSF" id="PIRSF036466">
    <property type="entry name" value="UCP036466"/>
    <property type="match status" value="1"/>
</dbReference>